<dbReference type="EC" id="3.1.-.-" evidence="1"/>
<dbReference type="EMBL" id="BX571857">
    <property type="protein sequence ID" value="CAG42659.1"/>
    <property type="molecule type" value="Genomic_DNA"/>
</dbReference>
<dbReference type="RefSeq" id="WP_000600387.1">
    <property type="nucleotide sequence ID" value="NC_002953.3"/>
</dbReference>
<dbReference type="SMR" id="Q6GAR2"/>
<dbReference type="KEGG" id="sas:SAS0884"/>
<dbReference type="HOGENOM" id="CLU_132020_0_0_9"/>
<dbReference type="GO" id="GO:0016788">
    <property type="term" value="F:hydrolase activity, acting on ester bonds"/>
    <property type="evidence" value="ECO:0007669"/>
    <property type="project" value="UniProtKB-UniRule"/>
</dbReference>
<dbReference type="Gene3D" id="3.90.1140.10">
    <property type="entry name" value="Cyclic phosphodiesterase"/>
    <property type="match status" value="1"/>
</dbReference>
<dbReference type="HAMAP" id="MF_01444">
    <property type="entry name" value="2H_phosphoesterase_YjcG"/>
    <property type="match status" value="1"/>
</dbReference>
<dbReference type="InterPro" id="IPR050580">
    <property type="entry name" value="2H_phosphoesterase_YjcG-like"/>
</dbReference>
<dbReference type="InterPro" id="IPR009097">
    <property type="entry name" value="Cyclic_Pdiesterase"/>
</dbReference>
<dbReference type="InterPro" id="IPR022932">
    <property type="entry name" value="YjcG"/>
</dbReference>
<dbReference type="NCBIfam" id="NF010223">
    <property type="entry name" value="PRK13679.1"/>
    <property type="match status" value="1"/>
</dbReference>
<dbReference type="PANTHER" id="PTHR40037:SF1">
    <property type="entry name" value="PHOSPHOESTERASE SAOUHSC_00951-RELATED"/>
    <property type="match status" value="1"/>
</dbReference>
<dbReference type="PANTHER" id="PTHR40037">
    <property type="entry name" value="PHOSPHOESTERASE YJCG-RELATED"/>
    <property type="match status" value="1"/>
</dbReference>
<dbReference type="Pfam" id="PF13563">
    <property type="entry name" value="2_5_RNA_ligase2"/>
    <property type="match status" value="1"/>
</dbReference>
<dbReference type="SUPFAM" id="SSF55144">
    <property type="entry name" value="LigT-like"/>
    <property type="match status" value="1"/>
</dbReference>
<organism>
    <name type="scientific">Staphylococcus aureus (strain MSSA476)</name>
    <dbReference type="NCBI Taxonomy" id="282459"/>
    <lineage>
        <taxon>Bacteria</taxon>
        <taxon>Bacillati</taxon>
        <taxon>Bacillota</taxon>
        <taxon>Bacilli</taxon>
        <taxon>Bacillales</taxon>
        <taxon>Staphylococcaceae</taxon>
        <taxon>Staphylococcus</taxon>
    </lineage>
</organism>
<feature type="chain" id="PRO_0000299340" description="Putative phosphoesterase SAS0884">
    <location>
        <begin position="1"/>
        <end position="169"/>
    </location>
</feature>
<feature type="short sequence motif" description="HXTX 1" evidence="1">
    <location>
        <begin position="34"/>
        <end position="37"/>
    </location>
</feature>
<feature type="short sequence motif" description="HXTX 2" evidence="1">
    <location>
        <begin position="115"/>
        <end position="118"/>
    </location>
</feature>
<feature type="active site" description="Proton donor" evidence="1">
    <location>
        <position position="34"/>
    </location>
</feature>
<feature type="active site" description="Proton acceptor" evidence="1">
    <location>
        <position position="115"/>
    </location>
</feature>
<proteinExistence type="inferred from homology"/>
<accession>Q6GAR2</accession>
<gene>
    <name type="ordered locus">SAS0884</name>
</gene>
<evidence type="ECO:0000255" key="1">
    <source>
        <dbReference type="HAMAP-Rule" id="MF_01444"/>
    </source>
</evidence>
<reference key="1">
    <citation type="journal article" date="2004" name="Proc. Natl. Acad. Sci. U.S.A.">
        <title>Complete genomes of two clinical Staphylococcus aureus strains: evidence for the rapid evolution of virulence and drug resistance.</title>
        <authorList>
            <person name="Holden M.T.G."/>
            <person name="Feil E.J."/>
            <person name="Lindsay J.A."/>
            <person name="Peacock S.J."/>
            <person name="Day N.P.J."/>
            <person name="Enright M.C."/>
            <person name="Foster T.J."/>
            <person name="Moore C.E."/>
            <person name="Hurst L."/>
            <person name="Atkin R."/>
            <person name="Barron A."/>
            <person name="Bason N."/>
            <person name="Bentley S.D."/>
            <person name="Chillingworth C."/>
            <person name="Chillingworth T."/>
            <person name="Churcher C."/>
            <person name="Clark L."/>
            <person name="Corton C."/>
            <person name="Cronin A."/>
            <person name="Doggett J."/>
            <person name="Dowd L."/>
            <person name="Feltwell T."/>
            <person name="Hance Z."/>
            <person name="Harris B."/>
            <person name="Hauser H."/>
            <person name="Holroyd S."/>
            <person name="Jagels K."/>
            <person name="James K.D."/>
            <person name="Lennard N."/>
            <person name="Line A."/>
            <person name="Mayes R."/>
            <person name="Moule S."/>
            <person name="Mungall K."/>
            <person name="Ormond D."/>
            <person name="Quail M.A."/>
            <person name="Rabbinowitsch E."/>
            <person name="Rutherford K.M."/>
            <person name="Sanders M."/>
            <person name="Sharp S."/>
            <person name="Simmonds M."/>
            <person name="Stevens K."/>
            <person name="Whitehead S."/>
            <person name="Barrell B.G."/>
            <person name="Spratt B.G."/>
            <person name="Parkhill J."/>
        </authorList>
    </citation>
    <scope>NUCLEOTIDE SEQUENCE [LARGE SCALE GENOMIC DNA]</scope>
    <source>
        <strain>MSSA476</strain>
    </source>
</reference>
<sequence length="169" mass="19327">MILGLALIPSKSFQEAVDSYRKRYDKQYSRIKPHVTIKAPFEIEDGDLDSVIEQVRARINGIPAVEVHATKASSFKPTNNVIYFKVAKTDDLEELFNRFNGEDFYGEAEHVFVPHFTIAQGLSSQEFEDIFGQVALAGVDHKEIIDELTLLRFDDDEDKWKVIETFKLA</sequence>
<comment type="similarity">
    <text evidence="1">Belongs to the 2H phosphoesterase superfamily. YjcG family.</text>
</comment>
<protein>
    <recommendedName>
        <fullName evidence="1">Putative phosphoesterase SAS0884</fullName>
        <ecNumber evidence="1">3.1.-.-</ecNumber>
    </recommendedName>
</protein>
<name>Y884_STAAS</name>
<keyword id="KW-0378">Hydrolase</keyword>